<dbReference type="EMBL" id="U09338">
    <property type="protein sequence ID" value="AAA56904.1"/>
    <property type="molecule type" value="mRNA"/>
</dbReference>
<dbReference type="EMBL" id="U09339">
    <property type="protein sequence ID" value="AAA56905.1"/>
    <property type="molecule type" value="Genomic_DNA"/>
</dbReference>
<dbReference type="EMBL" id="AJ440781">
    <property type="protein sequence ID" value="CAD29465.1"/>
    <property type="molecule type" value="mRNA"/>
</dbReference>
<dbReference type="EMBL" id="AL138646">
    <property type="protein sequence ID" value="CAB81825.1"/>
    <property type="molecule type" value="Genomic_DNA"/>
</dbReference>
<dbReference type="EMBL" id="CP002686">
    <property type="protein sequence ID" value="AEE80054.1"/>
    <property type="molecule type" value="Genomic_DNA"/>
</dbReference>
<dbReference type="EMBL" id="AY099565">
    <property type="protein sequence ID" value="AAM20417.1"/>
    <property type="molecule type" value="mRNA"/>
</dbReference>
<dbReference type="EMBL" id="BT008713">
    <property type="protein sequence ID" value="AAP42726.1"/>
    <property type="molecule type" value="mRNA"/>
</dbReference>
<dbReference type="PIR" id="T47850">
    <property type="entry name" value="T47850"/>
</dbReference>
<dbReference type="PIR" id="T52350">
    <property type="entry name" value="T52350"/>
</dbReference>
<dbReference type="RefSeq" id="NP_191598.1">
    <property type="nucleotide sequence ID" value="NM_115903.3"/>
</dbReference>
<dbReference type="SMR" id="P46602"/>
<dbReference type="BioGRID" id="10524">
    <property type="interactions" value="16"/>
</dbReference>
<dbReference type="FunCoup" id="P46602">
    <property type="interactions" value="28"/>
</dbReference>
<dbReference type="IntAct" id="P46602">
    <property type="interactions" value="16"/>
</dbReference>
<dbReference type="STRING" id="3702.P46602"/>
<dbReference type="PaxDb" id="3702-AT3G60390.1"/>
<dbReference type="ProteomicsDB" id="230307"/>
<dbReference type="EnsemblPlants" id="AT3G60390.1">
    <property type="protein sequence ID" value="AT3G60390.1"/>
    <property type="gene ID" value="AT3G60390"/>
</dbReference>
<dbReference type="GeneID" id="825210"/>
<dbReference type="Gramene" id="AT3G60390.1">
    <property type="protein sequence ID" value="AT3G60390.1"/>
    <property type="gene ID" value="AT3G60390"/>
</dbReference>
<dbReference type="KEGG" id="ath:AT3G60390"/>
<dbReference type="Araport" id="AT3G60390"/>
<dbReference type="TAIR" id="AT3G60390">
    <property type="gene designation" value="HAT3"/>
</dbReference>
<dbReference type="eggNOG" id="KOG0483">
    <property type="taxonomic scope" value="Eukaryota"/>
</dbReference>
<dbReference type="HOGENOM" id="CLU_049516_2_0_1"/>
<dbReference type="InParanoid" id="P46602"/>
<dbReference type="OMA" id="HLYMHMK"/>
<dbReference type="OrthoDB" id="6159439at2759"/>
<dbReference type="PhylomeDB" id="P46602"/>
<dbReference type="PRO" id="PR:P46602"/>
<dbReference type="Proteomes" id="UP000006548">
    <property type="component" value="Chromosome 3"/>
</dbReference>
<dbReference type="ExpressionAtlas" id="P46602">
    <property type="expression patterns" value="baseline and differential"/>
</dbReference>
<dbReference type="GO" id="GO:0005634">
    <property type="term" value="C:nucleus"/>
    <property type="evidence" value="ECO:0007669"/>
    <property type="project" value="UniProtKB-SubCell"/>
</dbReference>
<dbReference type="GO" id="GO:0003700">
    <property type="term" value="F:DNA-binding transcription factor activity"/>
    <property type="evidence" value="ECO:0000250"/>
    <property type="project" value="TAIR"/>
</dbReference>
<dbReference type="GO" id="GO:0000981">
    <property type="term" value="F:DNA-binding transcription factor activity, RNA polymerase II-specific"/>
    <property type="evidence" value="ECO:0007669"/>
    <property type="project" value="InterPro"/>
</dbReference>
<dbReference type="GO" id="GO:0043565">
    <property type="term" value="F:sequence-specific DNA binding"/>
    <property type="evidence" value="ECO:0007669"/>
    <property type="project" value="InterPro"/>
</dbReference>
<dbReference type="CDD" id="cd00086">
    <property type="entry name" value="homeodomain"/>
    <property type="match status" value="1"/>
</dbReference>
<dbReference type="FunFam" id="1.10.10.60:FF:000577">
    <property type="entry name" value="Homeobox-leucine zipper protein 18"/>
    <property type="match status" value="1"/>
</dbReference>
<dbReference type="Gene3D" id="1.10.10.60">
    <property type="entry name" value="Homeodomain-like"/>
    <property type="match status" value="1"/>
</dbReference>
<dbReference type="InterPro" id="IPR001356">
    <property type="entry name" value="HD"/>
</dbReference>
<dbReference type="InterPro" id="IPR050762">
    <property type="entry name" value="HD-ZIP_Homeobox_LZ_Class_II"/>
</dbReference>
<dbReference type="InterPro" id="IPR006712">
    <property type="entry name" value="HD-ZIP_N"/>
</dbReference>
<dbReference type="InterPro" id="IPR017970">
    <property type="entry name" value="Homeobox_CS"/>
</dbReference>
<dbReference type="InterPro" id="IPR009057">
    <property type="entry name" value="Homeodomain-like_sf"/>
</dbReference>
<dbReference type="InterPro" id="IPR003106">
    <property type="entry name" value="Leu_zip_homeo"/>
</dbReference>
<dbReference type="PANTHER" id="PTHR45714">
    <property type="entry name" value="HOMEOBOX-LEUCINE ZIPPER PROTEIN HAT14"/>
    <property type="match status" value="1"/>
</dbReference>
<dbReference type="PANTHER" id="PTHR45714:SF11">
    <property type="entry name" value="HOMEOBOX-LEUCINE ZIPPER PROTEIN HAT3"/>
    <property type="match status" value="1"/>
</dbReference>
<dbReference type="Pfam" id="PF02183">
    <property type="entry name" value="HALZ"/>
    <property type="match status" value="1"/>
</dbReference>
<dbReference type="Pfam" id="PF04618">
    <property type="entry name" value="HD-ZIP_N"/>
    <property type="match status" value="1"/>
</dbReference>
<dbReference type="Pfam" id="PF00046">
    <property type="entry name" value="Homeodomain"/>
    <property type="match status" value="1"/>
</dbReference>
<dbReference type="SMART" id="SM00340">
    <property type="entry name" value="HALZ"/>
    <property type="match status" value="1"/>
</dbReference>
<dbReference type="SMART" id="SM00389">
    <property type="entry name" value="HOX"/>
    <property type="match status" value="1"/>
</dbReference>
<dbReference type="SUPFAM" id="SSF46689">
    <property type="entry name" value="Homeodomain-like"/>
    <property type="match status" value="1"/>
</dbReference>
<dbReference type="PROSITE" id="PS00027">
    <property type="entry name" value="HOMEOBOX_1"/>
    <property type="match status" value="1"/>
</dbReference>
<dbReference type="PROSITE" id="PS50071">
    <property type="entry name" value="HOMEOBOX_2"/>
    <property type="match status" value="1"/>
</dbReference>
<protein>
    <recommendedName>
        <fullName>Homeobox-leucine zipper protein HAT3</fullName>
    </recommendedName>
    <alternativeName>
        <fullName>Homeodomain-leucine zipper protein HAT3</fullName>
        <shortName>HD-ZIP protein 3</shortName>
    </alternativeName>
</protein>
<feature type="chain" id="PRO_0000048900" description="Homeobox-leucine zipper protein HAT3">
    <location>
        <begin position="1"/>
        <end position="315"/>
    </location>
</feature>
<feature type="DNA-binding region" description="Homeobox" evidence="2">
    <location>
        <begin position="159"/>
        <end position="218"/>
    </location>
</feature>
<feature type="region of interest" description="Disordered" evidence="3">
    <location>
        <begin position="140"/>
        <end position="163"/>
    </location>
</feature>
<feature type="region of interest" description="Leucine-zipper">
    <location>
        <begin position="226"/>
        <end position="247"/>
    </location>
</feature>
<feature type="region of interest" description="Disordered" evidence="3">
    <location>
        <begin position="280"/>
        <end position="315"/>
    </location>
</feature>
<feature type="compositionally biased region" description="Low complexity" evidence="3">
    <location>
        <begin position="280"/>
        <end position="305"/>
    </location>
</feature>
<feature type="sequence conflict" description="In Ref. 1; AAA56904/AAA56905." evidence="4" ref="1">
    <original>A</original>
    <variation>Q</variation>
    <location>
        <position position="212"/>
    </location>
</feature>
<feature type="sequence conflict" description="In Ref. 1; AAA56904/AAA56905." evidence="4" ref="1">
    <original>S</original>
    <variation>P</variation>
    <location>
        <position position="281"/>
    </location>
</feature>
<comment type="function">
    <text evidence="1">Probable transcription factor.</text>
</comment>
<comment type="interaction">
    <interactant intactId="EBI-4450405">
        <id>P46602</id>
    </interactant>
    <interactant intactId="EBI-1536772">
        <id>O04292</id>
        <label>ATHB-9</label>
    </interactant>
    <organismsDiffer>false</organismsDiffer>
    <experiments>5</experiments>
</comment>
<comment type="interaction">
    <interactant intactId="EBI-4450405">
        <id>P46602</id>
    </interactant>
    <interactant intactId="EBI-3133795">
        <id>Q8GXM7</id>
        <label>ATHB-X</label>
    </interactant>
    <organismsDiffer>false</organismsDiffer>
    <experiments>5</experiments>
</comment>
<comment type="interaction">
    <interactant intactId="EBI-4450405">
        <id>P46602</id>
    </interactant>
    <interactant intactId="EBI-15195911">
        <id>P46600</id>
        <label>HAT1</label>
    </interactant>
    <organismsDiffer>false</organismsDiffer>
    <experiments>5</experiments>
</comment>
<comment type="interaction">
    <interactant intactId="EBI-4450405">
        <id>P46602</id>
    </interactant>
    <interactant intactId="EBI-4448195">
        <id>P46601</id>
        <label>HAT2</label>
    </interactant>
    <organismsDiffer>false</organismsDiffer>
    <experiments>3</experiments>
</comment>
<comment type="interaction">
    <interactant intactId="EBI-4450405">
        <id>P46602</id>
    </interactant>
    <interactant intactId="EBI-4448318">
        <id>P46604</id>
        <label>HAT22</label>
    </interactant>
    <organismsDiffer>false</organismsDiffer>
    <experiments>3</experiments>
</comment>
<comment type="interaction">
    <interactant intactId="EBI-4450405">
        <id>P46602</id>
    </interactant>
    <interactant intactId="EBI-4428728">
        <id>Q05466</id>
        <label>HAT4</label>
    </interactant>
    <organismsDiffer>false</organismsDiffer>
    <experiments>3</experiments>
</comment>
<comment type="subcellular location">
    <subcellularLocation>
        <location evidence="4">Nucleus</location>
    </subcellularLocation>
</comment>
<comment type="similarity">
    <text evidence="4">Belongs to the HD-ZIP homeobox family. Class II subfamily.</text>
</comment>
<sequence>MSERDDGLGLSLSLSLGFNQKDPSSRLNPMPLASYASSSHMQHMQQSNYNHPQKIQNTWINMFQSSERNSDMRSFLRGIDVNRAPSTVVVDVEDEGAGVSSPNSTVSSVMSGKKSERELMAAAGAVGGGRVEDNEIERASCSLGGGSDDEDGSGNGDDSSRKKLRLSKEQALVLEETFKEHSTLNPKQKMALAKQLNLRTRQVEVWFQNRRARTKLKQTEVDCEYLKRCCENLTDENRRLQKEVSELRALKLSPHLYMHMKPPTTLTMCPSCERVAVTSSSSSVAPPVMNSSSPMGPMSPWAAMPLRQRPAAGSH</sequence>
<reference key="1">
    <citation type="journal article" date="1994" name="Proc. Natl. Acad. Sci. U.S.A.">
        <title>Structure of homeobox-leucine zipper genes suggests a model for the evolution of gene families.</title>
        <authorList>
            <person name="Schena M."/>
            <person name="Davis R.W."/>
        </authorList>
    </citation>
    <scope>NUCLEOTIDE SEQUENCE [GENOMIC DNA / MRNA]</scope>
    <source>
        <strain>cv. Columbia</strain>
    </source>
</reference>
<reference key="2">
    <citation type="submission" date="2002-04" db="EMBL/GenBank/DDBJ databases">
        <title>Nucleotide sequence of the Arabidopsis HAT3 mRNA, encoding an HD-Zip II protein related to ATHB-2.</title>
        <authorList>
            <person name="Carabelli M."/>
            <person name="Ciarbelli A.R."/>
            <person name="Ruzza V."/>
            <person name="Sessa G."/>
            <person name="Steindler C."/>
            <person name="Ruberti I."/>
        </authorList>
    </citation>
    <scope>NUCLEOTIDE SEQUENCE [MRNA]</scope>
</reference>
<reference key="3">
    <citation type="journal article" date="2000" name="Nature">
        <title>Sequence and analysis of chromosome 3 of the plant Arabidopsis thaliana.</title>
        <authorList>
            <person name="Salanoubat M."/>
            <person name="Lemcke K."/>
            <person name="Rieger M."/>
            <person name="Ansorge W."/>
            <person name="Unseld M."/>
            <person name="Fartmann B."/>
            <person name="Valle G."/>
            <person name="Bloecker H."/>
            <person name="Perez-Alonso M."/>
            <person name="Obermaier B."/>
            <person name="Delseny M."/>
            <person name="Boutry M."/>
            <person name="Grivell L.A."/>
            <person name="Mache R."/>
            <person name="Puigdomenech P."/>
            <person name="De Simone V."/>
            <person name="Choisne N."/>
            <person name="Artiguenave F."/>
            <person name="Robert C."/>
            <person name="Brottier P."/>
            <person name="Wincker P."/>
            <person name="Cattolico L."/>
            <person name="Weissenbach J."/>
            <person name="Saurin W."/>
            <person name="Quetier F."/>
            <person name="Schaefer M."/>
            <person name="Mueller-Auer S."/>
            <person name="Gabel C."/>
            <person name="Fuchs M."/>
            <person name="Benes V."/>
            <person name="Wurmbach E."/>
            <person name="Drzonek H."/>
            <person name="Erfle H."/>
            <person name="Jordan N."/>
            <person name="Bangert S."/>
            <person name="Wiedelmann R."/>
            <person name="Kranz H."/>
            <person name="Voss H."/>
            <person name="Holland R."/>
            <person name="Brandt P."/>
            <person name="Nyakatura G."/>
            <person name="Vezzi A."/>
            <person name="D'Angelo M."/>
            <person name="Pallavicini A."/>
            <person name="Toppo S."/>
            <person name="Simionati B."/>
            <person name="Conrad A."/>
            <person name="Hornischer K."/>
            <person name="Kauer G."/>
            <person name="Loehnert T.-H."/>
            <person name="Nordsiek G."/>
            <person name="Reichelt J."/>
            <person name="Scharfe M."/>
            <person name="Schoen O."/>
            <person name="Bargues M."/>
            <person name="Terol J."/>
            <person name="Climent J."/>
            <person name="Navarro P."/>
            <person name="Collado C."/>
            <person name="Perez-Perez A."/>
            <person name="Ottenwaelder B."/>
            <person name="Duchemin D."/>
            <person name="Cooke R."/>
            <person name="Laudie M."/>
            <person name="Berger-Llauro C."/>
            <person name="Purnelle B."/>
            <person name="Masuy D."/>
            <person name="de Haan M."/>
            <person name="Maarse A.C."/>
            <person name="Alcaraz J.-P."/>
            <person name="Cottet A."/>
            <person name="Casacuberta E."/>
            <person name="Monfort A."/>
            <person name="Argiriou A."/>
            <person name="Flores M."/>
            <person name="Liguori R."/>
            <person name="Vitale D."/>
            <person name="Mannhaupt G."/>
            <person name="Haase D."/>
            <person name="Schoof H."/>
            <person name="Rudd S."/>
            <person name="Zaccaria P."/>
            <person name="Mewes H.-W."/>
            <person name="Mayer K.F.X."/>
            <person name="Kaul S."/>
            <person name="Town C.D."/>
            <person name="Koo H.L."/>
            <person name="Tallon L.J."/>
            <person name="Jenkins J."/>
            <person name="Rooney T."/>
            <person name="Rizzo M."/>
            <person name="Walts A."/>
            <person name="Utterback T."/>
            <person name="Fujii C.Y."/>
            <person name="Shea T.P."/>
            <person name="Creasy T.H."/>
            <person name="Haas B."/>
            <person name="Maiti R."/>
            <person name="Wu D."/>
            <person name="Peterson J."/>
            <person name="Van Aken S."/>
            <person name="Pai G."/>
            <person name="Militscher J."/>
            <person name="Sellers P."/>
            <person name="Gill J.E."/>
            <person name="Feldblyum T.V."/>
            <person name="Preuss D."/>
            <person name="Lin X."/>
            <person name="Nierman W.C."/>
            <person name="Salzberg S.L."/>
            <person name="White O."/>
            <person name="Venter J.C."/>
            <person name="Fraser C.M."/>
            <person name="Kaneko T."/>
            <person name="Nakamura Y."/>
            <person name="Sato S."/>
            <person name="Kato T."/>
            <person name="Asamizu E."/>
            <person name="Sasamoto S."/>
            <person name="Kimura T."/>
            <person name="Idesawa K."/>
            <person name="Kawashima K."/>
            <person name="Kishida Y."/>
            <person name="Kiyokawa C."/>
            <person name="Kohara M."/>
            <person name="Matsumoto M."/>
            <person name="Matsuno A."/>
            <person name="Muraki A."/>
            <person name="Nakayama S."/>
            <person name="Nakazaki N."/>
            <person name="Shinpo S."/>
            <person name="Takeuchi C."/>
            <person name="Wada T."/>
            <person name="Watanabe A."/>
            <person name="Yamada M."/>
            <person name="Yasuda M."/>
            <person name="Tabata S."/>
        </authorList>
    </citation>
    <scope>NUCLEOTIDE SEQUENCE [LARGE SCALE GENOMIC DNA]</scope>
    <source>
        <strain>cv. Columbia</strain>
    </source>
</reference>
<reference key="4">
    <citation type="journal article" date="2017" name="Plant J.">
        <title>Araport11: a complete reannotation of the Arabidopsis thaliana reference genome.</title>
        <authorList>
            <person name="Cheng C.Y."/>
            <person name="Krishnakumar V."/>
            <person name="Chan A.P."/>
            <person name="Thibaud-Nissen F."/>
            <person name="Schobel S."/>
            <person name="Town C.D."/>
        </authorList>
    </citation>
    <scope>GENOME REANNOTATION</scope>
    <source>
        <strain>cv. Columbia</strain>
    </source>
</reference>
<reference key="5">
    <citation type="journal article" date="2003" name="Science">
        <title>Empirical analysis of transcriptional activity in the Arabidopsis genome.</title>
        <authorList>
            <person name="Yamada K."/>
            <person name="Lim J."/>
            <person name="Dale J.M."/>
            <person name="Chen H."/>
            <person name="Shinn P."/>
            <person name="Palm C.J."/>
            <person name="Southwick A.M."/>
            <person name="Wu H.C."/>
            <person name="Kim C.J."/>
            <person name="Nguyen M."/>
            <person name="Pham P.K."/>
            <person name="Cheuk R.F."/>
            <person name="Karlin-Newmann G."/>
            <person name="Liu S.X."/>
            <person name="Lam B."/>
            <person name="Sakano H."/>
            <person name="Wu T."/>
            <person name="Yu G."/>
            <person name="Miranda M."/>
            <person name="Quach H.L."/>
            <person name="Tripp M."/>
            <person name="Chang C.H."/>
            <person name="Lee J.M."/>
            <person name="Toriumi M.J."/>
            <person name="Chan M.M."/>
            <person name="Tang C.C."/>
            <person name="Onodera C.S."/>
            <person name="Deng J.M."/>
            <person name="Akiyama K."/>
            <person name="Ansari Y."/>
            <person name="Arakawa T."/>
            <person name="Banh J."/>
            <person name="Banno F."/>
            <person name="Bowser L."/>
            <person name="Brooks S.Y."/>
            <person name="Carninci P."/>
            <person name="Chao Q."/>
            <person name="Choy N."/>
            <person name="Enju A."/>
            <person name="Goldsmith A.D."/>
            <person name="Gurjal M."/>
            <person name="Hansen N.F."/>
            <person name="Hayashizaki Y."/>
            <person name="Johnson-Hopson C."/>
            <person name="Hsuan V.W."/>
            <person name="Iida K."/>
            <person name="Karnes M."/>
            <person name="Khan S."/>
            <person name="Koesema E."/>
            <person name="Ishida J."/>
            <person name="Jiang P.X."/>
            <person name="Jones T."/>
            <person name="Kawai J."/>
            <person name="Kamiya A."/>
            <person name="Meyers C."/>
            <person name="Nakajima M."/>
            <person name="Narusaka M."/>
            <person name="Seki M."/>
            <person name="Sakurai T."/>
            <person name="Satou M."/>
            <person name="Tamse R."/>
            <person name="Vaysberg M."/>
            <person name="Wallender E.K."/>
            <person name="Wong C."/>
            <person name="Yamamura Y."/>
            <person name="Yuan S."/>
            <person name="Shinozaki K."/>
            <person name="Davis R.W."/>
            <person name="Theologis A."/>
            <person name="Ecker J.R."/>
        </authorList>
    </citation>
    <scope>NUCLEOTIDE SEQUENCE [LARGE SCALE MRNA]</scope>
    <source>
        <strain>cv. Columbia</strain>
    </source>
</reference>
<reference key="6">
    <citation type="journal article" date="2005" name="Plant Physiol.">
        <title>Homeodomain leucine zipper class I genes in Arabidopsis. Expression patterns and phylogenetic relationships.</title>
        <authorList>
            <person name="Henriksson E."/>
            <person name="Olsson A.S.B."/>
            <person name="Johannesson H."/>
            <person name="Johansson H."/>
            <person name="Hanson J."/>
            <person name="Engstroem P."/>
            <person name="Soederman E."/>
        </authorList>
    </citation>
    <scope>GENE FAMILY</scope>
</reference>
<keyword id="KW-0238">DNA-binding</keyword>
<keyword id="KW-0371">Homeobox</keyword>
<keyword id="KW-0539">Nucleus</keyword>
<keyword id="KW-1185">Reference proteome</keyword>
<keyword id="KW-0804">Transcription</keyword>
<keyword id="KW-0805">Transcription regulation</keyword>
<proteinExistence type="evidence at protein level"/>
<accession>P46602</accession>
<accession>Q546G9</accession>
<accession>Q9M220</accession>
<gene>
    <name type="primary">HAT3</name>
    <name type="ordered locus">At3g60390</name>
    <name type="ORF">T8B10_50</name>
</gene>
<evidence type="ECO:0000250" key="1"/>
<evidence type="ECO:0000255" key="2">
    <source>
        <dbReference type="PROSITE-ProRule" id="PRU00108"/>
    </source>
</evidence>
<evidence type="ECO:0000256" key="3">
    <source>
        <dbReference type="SAM" id="MobiDB-lite"/>
    </source>
</evidence>
<evidence type="ECO:0000305" key="4"/>
<organism>
    <name type="scientific">Arabidopsis thaliana</name>
    <name type="common">Mouse-ear cress</name>
    <dbReference type="NCBI Taxonomy" id="3702"/>
    <lineage>
        <taxon>Eukaryota</taxon>
        <taxon>Viridiplantae</taxon>
        <taxon>Streptophyta</taxon>
        <taxon>Embryophyta</taxon>
        <taxon>Tracheophyta</taxon>
        <taxon>Spermatophyta</taxon>
        <taxon>Magnoliopsida</taxon>
        <taxon>eudicotyledons</taxon>
        <taxon>Gunneridae</taxon>
        <taxon>Pentapetalae</taxon>
        <taxon>rosids</taxon>
        <taxon>malvids</taxon>
        <taxon>Brassicales</taxon>
        <taxon>Brassicaceae</taxon>
        <taxon>Camelineae</taxon>
        <taxon>Arabidopsis</taxon>
    </lineage>
</organism>
<name>HAT3_ARATH</name>